<reference key="1">
    <citation type="journal article" date="2006" name="Lancet">
        <title>Complete genome sequence of USA300, an epidemic clone of community-acquired meticillin-resistant Staphylococcus aureus.</title>
        <authorList>
            <person name="Diep B.A."/>
            <person name="Gill S.R."/>
            <person name="Chang R.F."/>
            <person name="Phan T.H."/>
            <person name="Chen J.H."/>
            <person name="Davidson M.G."/>
            <person name="Lin F."/>
            <person name="Lin J."/>
            <person name="Carleton H.A."/>
            <person name="Mongodin E.F."/>
            <person name="Sensabaugh G.F."/>
            <person name="Perdreau-Remington F."/>
        </authorList>
    </citation>
    <scope>NUCLEOTIDE SEQUENCE [LARGE SCALE GENOMIC DNA]</scope>
    <source>
        <strain>USA300</strain>
    </source>
</reference>
<comment type="function">
    <text evidence="1">Catalyzes the condensation of pantoate with beta-alanine in an ATP-dependent reaction via a pantoyl-adenylate intermediate.</text>
</comment>
<comment type="catalytic activity">
    <reaction evidence="1">
        <text>(R)-pantoate + beta-alanine + ATP = (R)-pantothenate + AMP + diphosphate + H(+)</text>
        <dbReference type="Rhea" id="RHEA:10912"/>
        <dbReference type="ChEBI" id="CHEBI:15378"/>
        <dbReference type="ChEBI" id="CHEBI:15980"/>
        <dbReference type="ChEBI" id="CHEBI:29032"/>
        <dbReference type="ChEBI" id="CHEBI:30616"/>
        <dbReference type="ChEBI" id="CHEBI:33019"/>
        <dbReference type="ChEBI" id="CHEBI:57966"/>
        <dbReference type="ChEBI" id="CHEBI:456215"/>
        <dbReference type="EC" id="6.3.2.1"/>
    </reaction>
</comment>
<comment type="pathway">
    <text evidence="1">Cofactor biosynthesis; (R)-pantothenate biosynthesis; (R)-pantothenate from (R)-pantoate and beta-alanine: step 1/1.</text>
</comment>
<comment type="subunit">
    <text evidence="1">Homodimer.</text>
</comment>
<comment type="subcellular location">
    <subcellularLocation>
        <location evidence="1">Cytoplasm</location>
    </subcellularLocation>
</comment>
<comment type="miscellaneous">
    <text evidence="1">The reaction proceeds by a bi uni uni bi ping pong mechanism.</text>
</comment>
<comment type="similarity">
    <text evidence="1">Belongs to the pantothenate synthetase family.</text>
</comment>
<dbReference type="EC" id="6.3.2.1" evidence="1"/>
<dbReference type="EMBL" id="CP000255">
    <property type="protein sequence ID" value="ABD20846.1"/>
    <property type="molecule type" value="Genomic_DNA"/>
</dbReference>
<dbReference type="RefSeq" id="WP_000163735.1">
    <property type="nucleotide sequence ID" value="NZ_CP027476.1"/>
</dbReference>
<dbReference type="SMR" id="Q2FDR1"/>
<dbReference type="KEGG" id="saa:SAUSA300_2533"/>
<dbReference type="HOGENOM" id="CLU_047148_0_0_9"/>
<dbReference type="OMA" id="CNHKLEP"/>
<dbReference type="UniPathway" id="UPA00028">
    <property type="reaction ID" value="UER00005"/>
</dbReference>
<dbReference type="Proteomes" id="UP000001939">
    <property type="component" value="Chromosome"/>
</dbReference>
<dbReference type="GO" id="GO:0005829">
    <property type="term" value="C:cytosol"/>
    <property type="evidence" value="ECO:0007669"/>
    <property type="project" value="TreeGrafter"/>
</dbReference>
<dbReference type="GO" id="GO:0005524">
    <property type="term" value="F:ATP binding"/>
    <property type="evidence" value="ECO:0007669"/>
    <property type="project" value="UniProtKB-KW"/>
</dbReference>
<dbReference type="GO" id="GO:0004592">
    <property type="term" value="F:pantoate-beta-alanine ligase activity"/>
    <property type="evidence" value="ECO:0007669"/>
    <property type="project" value="UniProtKB-UniRule"/>
</dbReference>
<dbReference type="GO" id="GO:0015940">
    <property type="term" value="P:pantothenate biosynthetic process"/>
    <property type="evidence" value="ECO:0007669"/>
    <property type="project" value="UniProtKB-UniRule"/>
</dbReference>
<dbReference type="CDD" id="cd00560">
    <property type="entry name" value="PanC"/>
    <property type="match status" value="1"/>
</dbReference>
<dbReference type="FunFam" id="3.30.1300.10:FF:000001">
    <property type="entry name" value="Pantothenate synthetase"/>
    <property type="match status" value="1"/>
</dbReference>
<dbReference type="FunFam" id="3.40.50.620:FF:000013">
    <property type="entry name" value="Pantothenate synthetase"/>
    <property type="match status" value="1"/>
</dbReference>
<dbReference type="Gene3D" id="3.40.50.620">
    <property type="entry name" value="HUPs"/>
    <property type="match status" value="1"/>
</dbReference>
<dbReference type="Gene3D" id="3.30.1300.10">
    <property type="entry name" value="Pantoate-beta-alanine ligase, C-terminal domain"/>
    <property type="match status" value="1"/>
</dbReference>
<dbReference type="HAMAP" id="MF_00158">
    <property type="entry name" value="PanC"/>
    <property type="match status" value="1"/>
</dbReference>
<dbReference type="InterPro" id="IPR003721">
    <property type="entry name" value="Pantoate_ligase"/>
</dbReference>
<dbReference type="InterPro" id="IPR042176">
    <property type="entry name" value="Pantoate_ligase_C"/>
</dbReference>
<dbReference type="InterPro" id="IPR014729">
    <property type="entry name" value="Rossmann-like_a/b/a_fold"/>
</dbReference>
<dbReference type="NCBIfam" id="TIGR00018">
    <property type="entry name" value="panC"/>
    <property type="match status" value="1"/>
</dbReference>
<dbReference type="PANTHER" id="PTHR21299">
    <property type="entry name" value="CYTIDYLATE KINASE/PANTOATE-BETA-ALANINE LIGASE"/>
    <property type="match status" value="1"/>
</dbReference>
<dbReference type="PANTHER" id="PTHR21299:SF1">
    <property type="entry name" value="PANTOATE--BETA-ALANINE LIGASE"/>
    <property type="match status" value="1"/>
</dbReference>
<dbReference type="Pfam" id="PF02569">
    <property type="entry name" value="Pantoate_ligase"/>
    <property type="match status" value="1"/>
</dbReference>
<dbReference type="SUPFAM" id="SSF52374">
    <property type="entry name" value="Nucleotidylyl transferase"/>
    <property type="match status" value="1"/>
</dbReference>
<proteinExistence type="inferred from homology"/>
<feature type="chain" id="PRO_0000305561" description="Pantothenate synthetase">
    <location>
        <begin position="1"/>
        <end position="283"/>
    </location>
</feature>
<feature type="active site" description="Proton donor" evidence="1">
    <location>
        <position position="38"/>
    </location>
</feature>
<feature type="binding site" evidence="1">
    <location>
        <begin position="31"/>
        <end position="38"/>
    </location>
    <ligand>
        <name>ATP</name>
        <dbReference type="ChEBI" id="CHEBI:30616"/>
    </ligand>
</feature>
<feature type="binding site" evidence="1">
    <location>
        <position position="62"/>
    </location>
    <ligand>
        <name>(R)-pantoate</name>
        <dbReference type="ChEBI" id="CHEBI:15980"/>
    </ligand>
</feature>
<feature type="binding site" evidence="1">
    <location>
        <position position="62"/>
    </location>
    <ligand>
        <name>beta-alanine</name>
        <dbReference type="ChEBI" id="CHEBI:57966"/>
    </ligand>
</feature>
<feature type="binding site" evidence="1">
    <location>
        <begin position="148"/>
        <end position="151"/>
    </location>
    <ligand>
        <name>ATP</name>
        <dbReference type="ChEBI" id="CHEBI:30616"/>
    </ligand>
</feature>
<feature type="binding site" evidence="1">
    <location>
        <position position="154"/>
    </location>
    <ligand>
        <name>(R)-pantoate</name>
        <dbReference type="ChEBI" id="CHEBI:15980"/>
    </ligand>
</feature>
<feature type="binding site" evidence="1">
    <location>
        <position position="177"/>
    </location>
    <ligand>
        <name>ATP</name>
        <dbReference type="ChEBI" id="CHEBI:30616"/>
    </ligand>
</feature>
<feature type="binding site" evidence="1">
    <location>
        <begin position="185"/>
        <end position="188"/>
    </location>
    <ligand>
        <name>ATP</name>
        <dbReference type="ChEBI" id="CHEBI:30616"/>
    </ligand>
</feature>
<sequence>MTKLITTVKEMQHIVKAAKRSGTTIGFIPTMGALHDGHLTMVRESVSTNDITIVSVFVNPLQFGPNEDFDAYPRQIDKDLELVSEVGADIVFHPAVEDMYPGELGIDVKVGPLADVLEGAKRPGHFDGVVTVVNKLFNIVMPDYAYFGKKDAQQLAIVEQMVKDFNHAVEIIGIDIVREADGLAKSSRNVYLTEQERQEAVHLSKSLLLAQALYQDGERQSKVIIDRVTEYLESHISGRIEEVAVYSYPQLVEQHEITGRIFISLAVKFSKARLIDNIIIGAE</sequence>
<keyword id="KW-0067">ATP-binding</keyword>
<keyword id="KW-0963">Cytoplasm</keyword>
<keyword id="KW-0436">Ligase</keyword>
<keyword id="KW-0547">Nucleotide-binding</keyword>
<keyword id="KW-0566">Pantothenate biosynthesis</keyword>
<protein>
    <recommendedName>
        <fullName evidence="1">Pantothenate synthetase</fullName>
        <shortName evidence="1">PS</shortName>
        <ecNumber evidence="1">6.3.2.1</ecNumber>
    </recommendedName>
    <alternativeName>
        <fullName evidence="1">Pantoate--beta-alanine ligase</fullName>
    </alternativeName>
    <alternativeName>
        <fullName evidence="1">Pantoate-activating enzyme</fullName>
    </alternativeName>
</protein>
<name>PANC_STAA3</name>
<accession>Q2FDR1</accession>
<evidence type="ECO:0000255" key="1">
    <source>
        <dbReference type="HAMAP-Rule" id="MF_00158"/>
    </source>
</evidence>
<organism>
    <name type="scientific">Staphylococcus aureus (strain USA300)</name>
    <dbReference type="NCBI Taxonomy" id="367830"/>
    <lineage>
        <taxon>Bacteria</taxon>
        <taxon>Bacillati</taxon>
        <taxon>Bacillota</taxon>
        <taxon>Bacilli</taxon>
        <taxon>Bacillales</taxon>
        <taxon>Staphylococcaceae</taxon>
        <taxon>Staphylococcus</taxon>
    </lineage>
</organism>
<gene>
    <name evidence="1" type="primary">panC</name>
    <name type="ordered locus">SAUSA300_2533</name>
</gene>